<accession>B5YWY8</accession>
<evidence type="ECO:0000255" key="1">
    <source>
        <dbReference type="HAMAP-Rule" id="MF_01959"/>
    </source>
</evidence>
<evidence type="ECO:0000256" key="2">
    <source>
        <dbReference type="SAM" id="MobiDB-lite"/>
    </source>
</evidence>
<gene>
    <name evidence="1" type="primary">ccmE</name>
    <name evidence="1" type="synonym">cycJ</name>
    <name type="ordered locus">ECH74115_3334</name>
</gene>
<protein>
    <recommendedName>
        <fullName evidence="1">Cytochrome c-type biogenesis protein CcmE</fullName>
    </recommendedName>
    <alternativeName>
        <fullName evidence="1">Cytochrome c maturation protein E</fullName>
    </alternativeName>
    <alternativeName>
        <fullName evidence="1">Heme chaperone CcmE</fullName>
    </alternativeName>
</protein>
<dbReference type="EMBL" id="CP001164">
    <property type="protein sequence ID" value="ACI37405.1"/>
    <property type="molecule type" value="Genomic_DNA"/>
</dbReference>
<dbReference type="RefSeq" id="WP_001026418.1">
    <property type="nucleotide sequence ID" value="NC_011353.1"/>
</dbReference>
<dbReference type="SMR" id="B5YWY8"/>
<dbReference type="GeneID" id="86860369"/>
<dbReference type="KEGG" id="ecf:ECH74115_3334"/>
<dbReference type="HOGENOM" id="CLU_079503_1_0_6"/>
<dbReference type="GO" id="GO:0005886">
    <property type="term" value="C:plasma membrane"/>
    <property type="evidence" value="ECO:0007669"/>
    <property type="project" value="UniProtKB-SubCell"/>
</dbReference>
<dbReference type="GO" id="GO:0020037">
    <property type="term" value="F:heme binding"/>
    <property type="evidence" value="ECO:0007669"/>
    <property type="project" value="InterPro"/>
</dbReference>
<dbReference type="GO" id="GO:0046872">
    <property type="term" value="F:metal ion binding"/>
    <property type="evidence" value="ECO:0007669"/>
    <property type="project" value="UniProtKB-KW"/>
</dbReference>
<dbReference type="GO" id="GO:0017004">
    <property type="term" value="P:cytochrome complex assembly"/>
    <property type="evidence" value="ECO:0007669"/>
    <property type="project" value="UniProtKB-KW"/>
</dbReference>
<dbReference type="FunFam" id="2.40.50.140:FF:000104">
    <property type="entry name" value="Cytochrome c-type biogenesis protein CcmE"/>
    <property type="match status" value="1"/>
</dbReference>
<dbReference type="Gene3D" id="2.40.50.140">
    <property type="entry name" value="Nucleic acid-binding proteins"/>
    <property type="match status" value="1"/>
</dbReference>
<dbReference type="HAMAP" id="MF_01959">
    <property type="entry name" value="CcmE"/>
    <property type="match status" value="1"/>
</dbReference>
<dbReference type="InterPro" id="IPR004329">
    <property type="entry name" value="CcmE"/>
</dbReference>
<dbReference type="InterPro" id="IPR036127">
    <property type="entry name" value="CcmE-like_sf"/>
</dbReference>
<dbReference type="InterPro" id="IPR012340">
    <property type="entry name" value="NA-bd_OB-fold"/>
</dbReference>
<dbReference type="NCBIfam" id="NF009635">
    <property type="entry name" value="PRK13150.1"/>
    <property type="match status" value="1"/>
</dbReference>
<dbReference type="NCBIfam" id="NF009638">
    <property type="entry name" value="PRK13165.1"/>
    <property type="match status" value="1"/>
</dbReference>
<dbReference type="NCBIfam" id="NF009727">
    <property type="entry name" value="PRK13254.1-1"/>
    <property type="match status" value="1"/>
</dbReference>
<dbReference type="NCBIfam" id="NF009729">
    <property type="entry name" value="PRK13254.1-3"/>
    <property type="match status" value="1"/>
</dbReference>
<dbReference type="PANTHER" id="PTHR34128">
    <property type="entry name" value="CYTOCHROME C-TYPE BIOGENESIS PROTEIN CCME HOMOLOG, MITOCHONDRIAL"/>
    <property type="match status" value="1"/>
</dbReference>
<dbReference type="PANTHER" id="PTHR34128:SF2">
    <property type="entry name" value="CYTOCHROME C-TYPE BIOGENESIS PROTEIN CCME HOMOLOG, MITOCHONDRIAL"/>
    <property type="match status" value="1"/>
</dbReference>
<dbReference type="Pfam" id="PF03100">
    <property type="entry name" value="CcmE"/>
    <property type="match status" value="1"/>
</dbReference>
<dbReference type="SUPFAM" id="SSF82093">
    <property type="entry name" value="Heme chaperone CcmE"/>
    <property type="match status" value="1"/>
</dbReference>
<proteinExistence type="inferred from homology"/>
<keyword id="KW-0997">Cell inner membrane</keyword>
<keyword id="KW-1003">Cell membrane</keyword>
<keyword id="KW-0201">Cytochrome c-type biogenesis</keyword>
<keyword id="KW-0349">Heme</keyword>
<keyword id="KW-0408">Iron</keyword>
<keyword id="KW-0472">Membrane</keyword>
<keyword id="KW-0479">Metal-binding</keyword>
<keyword id="KW-0735">Signal-anchor</keyword>
<keyword id="KW-0812">Transmembrane</keyword>
<keyword id="KW-1133">Transmembrane helix</keyword>
<feature type="chain" id="PRO_1000189015" description="Cytochrome c-type biogenesis protein CcmE">
    <location>
        <begin position="1"/>
        <end position="159"/>
    </location>
</feature>
<feature type="topological domain" description="Cytoplasmic" evidence="1">
    <location>
        <begin position="1"/>
        <end position="8"/>
    </location>
</feature>
<feature type="transmembrane region" description="Helical; Signal-anchor for type II membrane protein" evidence="1">
    <location>
        <begin position="9"/>
        <end position="29"/>
    </location>
</feature>
<feature type="topological domain" description="Periplasmic" evidence="1">
    <location>
        <begin position="30"/>
        <end position="159"/>
    </location>
</feature>
<feature type="region of interest" description="Disordered" evidence="2">
    <location>
        <begin position="132"/>
        <end position="159"/>
    </location>
</feature>
<feature type="compositionally biased region" description="Basic and acidic residues" evidence="2">
    <location>
        <begin position="132"/>
        <end position="147"/>
    </location>
</feature>
<feature type="binding site" description="covalent" evidence="1">
    <location>
        <position position="130"/>
    </location>
    <ligand>
        <name>heme</name>
        <dbReference type="ChEBI" id="CHEBI:30413"/>
    </ligand>
</feature>
<feature type="binding site" description="axial binding residue" evidence="1">
    <location>
        <position position="134"/>
    </location>
    <ligand>
        <name>heme</name>
        <dbReference type="ChEBI" id="CHEBI:30413"/>
    </ligand>
    <ligandPart>
        <name>Fe</name>
        <dbReference type="ChEBI" id="CHEBI:18248"/>
    </ligandPart>
</feature>
<comment type="function">
    <text evidence="1">Heme chaperone required for the biogenesis of c-type cytochromes. Transiently binds heme delivered by CcmC and transfers the heme to apo-cytochromes in a process facilitated by CcmF and CcmH.</text>
</comment>
<comment type="subcellular location">
    <subcellularLocation>
        <location evidence="1">Cell inner membrane</location>
        <topology evidence="1">Single-pass type II membrane protein</topology>
        <orientation evidence="1">Periplasmic side</orientation>
    </subcellularLocation>
</comment>
<comment type="similarity">
    <text evidence="1">Belongs to the CcmE/CycJ family.</text>
</comment>
<reference key="1">
    <citation type="journal article" date="2011" name="Proc. Natl. Acad. Sci. U.S.A.">
        <title>Genomic anatomy of Escherichia coli O157:H7 outbreaks.</title>
        <authorList>
            <person name="Eppinger M."/>
            <person name="Mammel M.K."/>
            <person name="Leclerc J.E."/>
            <person name="Ravel J."/>
            <person name="Cebula T.A."/>
        </authorList>
    </citation>
    <scope>NUCLEOTIDE SEQUENCE [LARGE SCALE GENOMIC DNA]</scope>
    <source>
        <strain>EC4115 / EHEC</strain>
    </source>
</reference>
<name>CCME_ECO5E</name>
<organism>
    <name type="scientific">Escherichia coli O157:H7 (strain EC4115 / EHEC)</name>
    <dbReference type="NCBI Taxonomy" id="444450"/>
    <lineage>
        <taxon>Bacteria</taxon>
        <taxon>Pseudomonadati</taxon>
        <taxon>Pseudomonadota</taxon>
        <taxon>Gammaproteobacteria</taxon>
        <taxon>Enterobacterales</taxon>
        <taxon>Enterobacteriaceae</taxon>
        <taxon>Escherichia</taxon>
    </lineage>
</organism>
<sequence length="159" mass="17698">MNIRRKNRLWIACAVLAGLALTIGLVLYALRSNIDLFYTPGEILYGKRETQQMPEVGQRLRVGGMVMPGSVQRDPNSLKVTFTIYDAEGSVDVSYEGILPDLFREGQGVVVQGELEKGNHILAKEVLAKHDENYTPPEVEKAMEANHRRPASVYKDPAS</sequence>